<feature type="initiator methionine" description="Removed" evidence="2">
    <location>
        <position position="1"/>
    </location>
</feature>
<feature type="chain" id="PRO_0000121985" description="H/ACA ribonucleoprotein complex subunit DKC1">
    <location>
        <begin position="2"/>
        <end position="509"/>
    </location>
</feature>
<feature type="domain" description="PUA" evidence="5">
    <location>
        <begin position="297"/>
        <end position="372"/>
    </location>
</feature>
<feature type="region of interest" description="Disordered" evidence="6">
    <location>
        <begin position="1"/>
        <end position="25"/>
    </location>
</feature>
<feature type="region of interest" description="Nucleolar localization" evidence="1">
    <location>
        <begin position="2"/>
        <end position="22"/>
    </location>
</feature>
<feature type="region of interest" description="Disordered" evidence="6">
    <location>
        <begin position="381"/>
        <end position="509"/>
    </location>
</feature>
<feature type="region of interest" description="Nuclear and nucleolar localization" evidence="1">
    <location>
        <begin position="447"/>
        <end position="509"/>
    </location>
</feature>
<feature type="compositionally biased region" description="Basic residues" evidence="6">
    <location>
        <begin position="11"/>
        <end position="20"/>
    </location>
</feature>
<feature type="compositionally biased region" description="Basic and acidic residues" evidence="6">
    <location>
        <begin position="416"/>
        <end position="425"/>
    </location>
</feature>
<feature type="compositionally biased region" description="Basic residues" evidence="6">
    <location>
        <begin position="466"/>
        <end position="475"/>
    </location>
</feature>
<feature type="compositionally biased region" description="Acidic residues" evidence="6">
    <location>
        <begin position="481"/>
        <end position="490"/>
    </location>
</feature>
<feature type="active site" description="Nucleophile" evidence="3">
    <location>
        <position position="126"/>
    </location>
</feature>
<feature type="modified residue" description="N-acetylalanine" evidence="2">
    <location>
        <position position="2"/>
    </location>
</feature>
<feature type="modified residue" description="Phosphoserine" evidence="2">
    <location>
        <position position="388"/>
    </location>
</feature>
<feature type="modified residue" description="Phosphoserine" evidence="11">
    <location>
        <position position="452"/>
    </location>
</feature>
<feature type="modified residue" description="Phosphoserine" evidence="11">
    <location>
        <position position="454"/>
    </location>
</feature>
<feature type="modified residue" description="Phosphothreonine" evidence="4">
    <location>
        <position position="460"/>
    </location>
</feature>
<feature type="modified residue" description="Phosphoserine" evidence="2">
    <location>
        <position position="508"/>
    </location>
</feature>
<feature type="cross-link" description="Glycyl lysine isopeptide (Lys-Gly) (interchain with G-Cter in SUMO2)" evidence="2">
    <location>
        <position position="21"/>
    </location>
</feature>
<feature type="cross-link" description="Glycyl lysine isopeptide (Lys-Gly) (interchain with G-Cter in SUMO2)" evidence="2">
    <location>
        <position position="40"/>
    </location>
</feature>
<feature type="cross-link" description="Glycyl lysine isopeptide (Lys-Gly) (interchain with G-Cter in SUMO2)" evidence="2">
    <location>
        <position position="44"/>
    </location>
</feature>
<feature type="cross-link" description="Glycyl lysine isopeptide (Lys-Gly) (interchain with G-Cter in SUMO2)" evidence="2">
    <location>
        <position position="192"/>
    </location>
</feature>
<feature type="cross-link" description="Glycyl lysine isopeptide (Lys-Gly) (interchain with G-Cter in SUMO2)" evidence="2">
    <location>
        <position position="395"/>
    </location>
</feature>
<feature type="cross-link" description="Glycyl lysine isopeptide (Lys-Gly) (interchain with G-Cter in SUMO2)" evidence="2">
    <location>
        <position position="425"/>
    </location>
</feature>
<feature type="sequence conflict" description="In Ref. 1; AA sequence." evidence="10" ref="1">
    <original>ATPTTTPRVKKEKKKKKEKADGGEEAAEDGDGDATRKKKKKKARAAEELS</original>
    <variation>RRPLPRP</variation>
    <location>
        <begin position="459"/>
        <end position="508"/>
    </location>
</feature>
<comment type="function">
    <text evidence="2 7">Catalytic subunit of H/ACA small nucleolar ribonucleoprotein (H/ACA snoRNP) complex, which catalyzes pseudouridylation of rRNA (PubMed:12446766). This involves the isomerization of uridine such that the ribose is subsequently attached to C5, instead of the normal N1 (By similarity). Each rRNA can contain up to 100 pseudouridine ('psi') residues, which may serve to stabilize the conformation of rRNAs (By similarity). Required for ribosome biogenesis and telomere maintenance (By similarity). Also required for correct processing or intranuclear trafficking of TERC, the RNA component of the telomerase reverse transcriptase (TERT) holoenzyme (By similarity).</text>
</comment>
<comment type="catalytic activity">
    <reaction evidence="2">
        <text>uridine in 5S rRNA = pseudouridine in 5S rRNA</text>
        <dbReference type="Rhea" id="RHEA:47036"/>
        <dbReference type="Rhea" id="RHEA-COMP:11730"/>
        <dbReference type="Rhea" id="RHEA-COMP:11731"/>
        <dbReference type="ChEBI" id="CHEBI:65314"/>
        <dbReference type="ChEBI" id="CHEBI:65315"/>
    </reaction>
</comment>
<comment type="subunit">
    <text evidence="2 7">Part of the H/ACA small nucleolar ribonucleoprotein (H/ACA snoRNP) complex, which contains NHP2/NOLA2, GAR1/NOLA1, NOP10/NOLA3, and DKC1/NOLA4, which is presumed to be the catalytic subunit (PubMed:12446766). The complex contains a stable core formed by binding of one or two NOP10-DKC1 heterodimers to NHP2; GAR1 subsequently binds to this core via DKC1 (By similarity). The complex binds a box H/ACA small nucleolar RNA (snoRNA), which may target the specific site of modification within the RNA substrate (By similarity). During assembly, the complex contains NAF1 instead of GAR1/NOLA1 (By similarity). The complex also interacts with TERC, which contains a 3'-terminal domain related to the box H/ACA snoRNAs (By similarity). Specific interactions with snoRNAs or TERC are mediated by GAR1 and NHP2 (By similarity). Associates with NOLC1/NOPP140 (By similarity). H/ACA snoRNPs interact with the SMN complex, consisting of SMN1 or SMN2, GEMIN2/SIP1, DDX20/GEMIN3, and GEMIN4 (By similarity). This is mediated by interaction between GAR1 and SMN1 or SMN2 (By similarity). The SMN complex may be required for correct assembly of the H/ACA snoRNP complex (By similarity). Component of the telomerase holoenzyme complex composed of one molecule of TERT, one molecule of WRAP53/TCAB1, two molecules of H/ACA ribonucleoprotein complex subunits DKC1, NOP10, NHP2 and GAR1, and a telomerase RNA template component (TERC) (By similarity). The telomerase holoenzyme complex is associated with TEP1, SMG6/EST1A and POT1 (By similarity). Interacts with SHQ1; this interaction may lead to the stabilization of DKC1, from the time of its synthesis until its association with NOP10, NHP2, and NAF1 at the nascent H/ACA RNA (By similarity). Interacts with HMBOX1 (By similarity). Interacts with DHX36 (By similarity).</text>
</comment>
<comment type="interaction">
    <interactant intactId="EBI-5746997">
        <id>P40615</id>
    </interactant>
    <interactant intactId="EBI-8792072">
        <id>D3ZMP6</id>
        <label>Nop10</label>
    </interactant>
    <organismsDiffer>false</organismsDiffer>
    <experiments>4</experiments>
</comment>
<comment type="interaction">
    <interactant intactId="EBI-5746997">
        <id>P40615</id>
    </interactant>
    <interactant intactId="EBI-2515597">
        <id>Q96HR8</id>
        <label>NAF1</label>
    </interactant>
    <organismsDiffer>true</organismsDiffer>
    <experiments>3</experiments>
</comment>
<comment type="subcellular location">
    <subcellularLocation>
        <location evidence="8">Nucleus</location>
        <location evidence="8">Nucleolus</location>
    </subcellularLocation>
    <subcellularLocation>
        <location evidence="8">Nucleus</location>
        <location evidence="8">Cajal body</location>
    </subcellularLocation>
</comment>
<comment type="similarity">
    <text evidence="10">Belongs to the pseudouridine synthase TruB family.</text>
</comment>
<accession>P40615</accession>
<accession>Q499M9</accession>
<evidence type="ECO:0000250" key="1"/>
<evidence type="ECO:0000250" key="2">
    <source>
        <dbReference type="UniProtKB" id="O60832"/>
    </source>
</evidence>
<evidence type="ECO:0000250" key="3">
    <source>
        <dbReference type="UniProtKB" id="P60340"/>
    </source>
</evidence>
<evidence type="ECO:0000250" key="4">
    <source>
        <dbReference type="UniProtKB" id="Q9ESX5"/>
    </source>
</evidence>
<evidence type="ECO:0000255" key="5">
    <source>
        <dbReference type="PROSITE-ProRule" id="PRU00161"/>
    </source>
</evidence>
<evidence type="ECO:0000256" key="6">
    <source>
        <dbReference type="SAM" id="MobiDB-lite"/>
    </source>
</evidence>
<evidence type="ECO:0000269" key="7">
    <source>
    </source>
</evidence>
<evidence type="ECO:0000269" key="8">
    <source>
    </source>
</evidence>
<evidence type="ECO:0000303" key="9">
    <source>
    </source>
</evidence>
<evidence type="ECO:0000305" key="10"/>
<evidence type="ECO:0007744" key="11">
    <source>
    </source>
</evidence>
<keyword id="KW-0007">Acetylation</keyword>
<keyword id="KW-0903">Direct protein sequencing</keyword>
<keyword id="KW-0413">Isomerase</keyword>
<keyword id="KW-1017">Isopeptide bond</keyword>
<keyword id="KW-0539">Nucleus</keyword>
<keyword id="KW-0597">Phosphoprotein</keyword>
<keyword id="KW-1185">Reference proteome</keyword>
<keyword id="KW-0687">Ribonucleoprotein</keyword>
<keyword id="KW-0690">Ribosome biogenesis</keyword>
<keyword id="KW-0694">RNA-binding</keyword>
<keyword id="KW-0698">rRNA processing</keyword>
<keyword id="KW-0832">Ubl conjugation</keyword>
<gene>
    <name type="primary">Dkc1</name>
    <name evidence="9" type="synonym">Nap57</name>
</gene>
<reference key="1">
    <citation type="journal article" date="1994" name="J. Cell Biol.">
        <title>NAP57, a mammalian nucleolar protein with a putative homolog in yeast and bacteria.</title>
        <authorList>
            <person name="Meier U."/>
            <person name="Blobel G."/>
        </authorList>
    </citation>
    <scope>NUCLEOTIDE SEQUENCE [MRNA]</scope>
    <scope>PROTEIN SEQUENCE OF 21-43; 83-96 AND 98-119</scope>
    <scope>SUBCELLULAR LOCATION</scope>
    <scope>INTERACTION WITH NOLC1</scope>
    <source>
        <tissue>Liver</tissue>
    </source>
</reference>
<reference key="2">
    <citation type="submission" date="1997-12" db="UniProtKB">
        <authorList>
            <person name="Meier U."/>
        </authorList>
    </citation>
    <scope>SEQUENCE REVISION TO C-TERMINUS</scope>
</reference>
<reference key="3">
    <citation type="journal article" date="2004" name="Genome Res.">
        <title>The status, quality, and expansion of the NIH full-length cDNA project: the Mammalian Gene Collection (MGC).</title>
        <authorList>
            <consortium name="The MGC Project Team"/>
        </authorList>
    </citation>
    <scope>NUCLEOTIDE SEQUENCE [LARGE SCALE MRNA]</scope>
    <source>
        <tissue>Prostate</tissue>
    </source>
</reference>
<reference key="4">
    <citation type="journal article" date="2002" name="Mol. Cell. Biol.">
        <title>Immunopurified small nucleolar ribonucleoprotein particles pseudouridylate rRNA independently of their association with phosphorylated Nopp140.</title>
        <authorList>
            <person name="Wang C."/>
            <person name="Query C.C."/>
            <person name="Meier U.T."/>
        </authorList>
    </citation>
    <scope>FUNCTION</scope>
    <scope>INTERACTION WITH GAR1; NHP2; NOP10 AND NOLC1</scope>
    <scope>SUBCELLULAR LOCATION</scope>
</reference>
<reference key="5">
    <citation type="journal article" date="2012" name="Nat. Commun.">
        <title>Quantitative maps of protein phosphorylation sites across 14 different rat organs and tissues.</title>
        <authorList>
            <person name="Lundby A."/>
            <person name="Secher A."/>
            <person name="Lage K."/>
            <person name="Nordsborg N.B."/>
            <person name="Dmytriyev A."/>
            <person name="Lundby C."/>
            <person name="Olsen J.V."/>
        </authorList>
    </citation>
    <scope>PHOSPHORYLATION [LARGE SCALE ANALYSIS] AT SER-452 AND SER-454</scope>
    <scope>IDENTIFICATION BY MASS SPECTROMETRY [LARGE SCALE ANALYSIS]</scope>
</reference>
<proteinExistence type="evidence at protein level"/>
<organism>
    <name type="scientific">Rattus norvegicus</name>
    <name type="common">Rat</name>
    <dbReference type="NCBI Taxonomy" id="10116"/>
    <lineage>
        <taxon>Eukaryota</taxon>
        <taxon>Metazoa</taxon>
        <taxon>Chordata</taxon>
        <taxon>Craniata</taxon>
        <taxon>Vertebrata</taxon>
        <taxon>Euteleostomi</taxon>
        <taxon>Mammalia</taxon>
        <taxon>Eutheria</taxon>
        <taxon>Euarchontoglires</taxon>
        <taxon>Glires</taxon>
        <taxon>Rodentia</taxon>
        <taxon>Myomorpha</taxon>
        <taxon>Muroidea</taxon>
        <taxon>Muridae</taxon>
        <taxon>Murinae</taxon>
        <taxon>Rattus</taxon>
    </lineage>
</organism>
<name>DKC1_RAT</name>
<dbReference type="EC" id="5.4.99.-" evidence="2"/>
<dbReference type="EMBL" id="Z34922">
    <property type="protein sequence ID" value="CAA84402.1"/>
    <property type="molecule type" value="mRNA"/>
</dbReference>
<dbReference type="EMBL" id="BC099832">
    <property type="protein sequence ID" value="AAH99832.1"/>
    <property type="molecule type" value="mRNA"/>
</dbReference>
<dbReference type="PIR" id="A55163">
    <property type="entry name" value="A55163"/>
</dbReference>
<dbReference type="RefSeq" id="NP_596910.1">
    <property type="nucleotide sequence ID" value="NM_133419.1"/>
</dbReference>
<dbReference type="SMR" id="P40615"/>
<dbReference type="BioGRID" id="251042">
    <property type="interactions" value="1"/>
</dbReference>
<dbReference type="CORUM" id="P40615"/>
<dbReference type="FunCoup" id="P40615">
    <property type="interactions" value="3356"/>
</dbReference>
<dbReference type="IntAct" id="P40615">
    <property type="interactions" value="5"/>
</dbReference>
<dbReference type="STRING" id="10116.ENSRNOP00000074005"/>
<dbReference type="GlyGen" id="P40615">
    <property type="glycosylation" value="3 sites, 1 O-linked glycan (1 site)"/>
</dbReference>
<dbReference type="iPTMnet" id="P40615"/>
<dbReference type="PhosphoSitePlus" id="P40615"/>
<dbReference type="jPOST" id="P40615"/>
<dbReference type="PaxDb" id="10116-ENSRNOP00000064024"/>
<dbReference type="GeneID" id="170944"/>
<dbReference type="KEGG" id="rno:170944"/>
<dbReference type="AGR" id="RGD:621780"/>
<dbReference type="CTD" id="1736"/>
<dbReference type="RGD" id="621780">
    <property type="gene designation" value="Dkc1"/>
</dbReference>
<dbReference type="eggNOG" id="KOG2529">
    <property type="taxonomic scope" value="Eukaryota"/>
</dbReference>
<dbReference type="InParanoid" id="P40615"/>
<dbReference type="OrthoDB" id="49745at9989"/>
<dbReference type="PhylomeDB" id="P40615"/>
<dbReference type="Reactome" id="R-RNO-171319">
    <property type="pathway name" value="Telomere Extension By Telomerase"/>
</dbReference>
<dbReference type="PRO" id="PR:P40615"/>
<dbReference type="Proteomes" id="UP000002494">
    <property type="component" value="Unplaced"/>
</dbReference>
<dbReference type="GO" id="GO:0031429">
    <property type="term" value="C:box H/ACA snoRNP complex"/>
    <property type="evidence" value="ECO:0000314"/>
    <property type="project" value="RGD"/>
</dbReference>
<dbReference type="GO" id="GO:0090661">
    <property type="term" value="C:box H/ACA telomerase RNP complex"/>
    <property type="evidence" value="ECO:0000266"/>
    <property type="project" value="RGD"/>
</dbReference>
<dbReference type="GO" id="GO:0015030">
    <property type="term" value="C:Cajal body"/>
    <property type="evidence" value="ECO:0000314"/>
    <property type="project" value="RGD"/>
</dbReference>
<dbReference type="GO" id="GO:0005730">
    <property type="term" value="C:nucleolus"/>
    <property type="evidence" value="ECO:0000266"/>
    <property type="project" value="RGD"/>
</dbReference>
<dbReference type="GO" id="GO:0005654">
    <property type="term" value="C:nucleoplasm"/>
    <property type="evidence" value="ECO:0000314"/>
    <property type="project" value="RGD"/>
</dbReference>
<dbReference type="GO" id="GO:0005697">
    <property type="term" value="C:telomerase holoenzyme complex"/>
    <property type="evidence" value="ECO:0000250"/>
    <property type="project" value="UniProtKB"/>
</dbReference>
<dbReference type="GO" id="GO:0034513">
    <property type="term" value="F:box H/ACA snoRNA binding"/>
    <property type="evidence" value="ECO:0000266"/>
    <property type="project" value="RGD"/>
</dbReference>
<dbReference type="GO" id="GO:0009982">
    <property type="term" value="F:pseudouridine synthase activity"/>
    <property type="evidence" value="ECO:0000250"/>
    <property type="project" value="UniProtKB"/>
</dbReference>
<dbReference type="GO" id="GO:0003723">
    <property type="term" value="F:RNA binding"/>
    <property type="evidence" value="ECO:0000266"/>
    <property type="project" value="RGD"/>
</dbReference>
<dbReference type="GO" id="GO:0003720">
    <property type="term" value="F:telomerase activity"/>
    <property type="evidence" value="ECO:0000266"/>
    <property type="project" value="RGD"/>
</dbReference>
<dbReference type="GO" id="GO:0070034">
    <property type="term" value="F:telomerase RNA binding"/>
    <property type="evidence" value="ECO:0000266"/>
    <property type="project" value="RGD"/>
</dbReference>
<dbReference type="GO" id="GO:0000495">
    <property type="term" value="P:box H/ACA sno(s)RNA 3'-end processing"/>
    <property type="evidence" value="ECO:0000318"/>
    <property type="project" value="GO_Central"/>
</dbReference>
<dbReference type="GO" id="GO:0033979">
    <property type="term" value="P:box H/ACA sno(s)RNA metabolic process"/>
    <property type="evidence" value="ECO:0000266"/>
    <property type="project" value="RGD"/>
</dbReference>
<dbReference type="GO" id="GO:0000455">
    <property type="term" value="P:enzyme-directed rRNA pseudouridine synthesis"/>
    <property type="evidence" value="ECO:0000250"/>
    <property type="project" value="UniProtKB"/>
</dbReference>
<dbReference type="GO" id="GO:1990481">
    <property type="term" value="P:mRNA pseudouridine synthesis"/>
    <property type="evidence" value="ECO:0000318"/>
    <property type="project" value="GO_Central"/>
</dbReference>
<dbReference type="GO" id="GO:0008284">
    <property type="term" value="P:positive regulation of cell population proliferation"/>
    <property type="evidence" value="ECO:0000314"/>
    <property type="project" value="RGD"/>
</dbReference>
<dbReference type="GO" id="GO:1904874">
    <property type="term" value="P:positive regulation of telomerase RNA localization to Cajal body"/>
    <property type="evidence" value="ECO:0000266"/>
    <property type="project" value="RGD"/>
</dbReference>
<dbReference type="GO" id="GO:0032212">
    <property type="term" value="P:positive regulation of telomere maintenance via telomerase"/>
    <property type="evidence" value="ECO:0000266"/>
    <property type="project" value="RGD"/>
</dbReference>
<dbReference type="GO" id="GO:1904872">
    <property type="term" value="P:regulation of telomerase RNA localization to Cajal body"/>
    <property type="evidence" value="ECO:0000266"/>
    <property type="project" value="RGD"/>
</dbReference>
<dbReference type="GO" id="GO:0031118">
    <property type="term" value="P:rRNA pseudouridine synthesis"/>
    <property type="evidence" value="ECO:0000266"/>
    <property type="project" value="RGD"/>
</dbReference>
<dbReference type="GO" id="GO:0090666">
    <property type="term" value="P:scaRNA localization to Cajal body"/>
    <property type="evidence" value="ECO:0000266"/>
    <property type="project" value="RGD"/>
</dbReference>
<dbReference type="GO" id="GO:0000454">
    <property type="term" value="P:snoRNA guided rRNA pseudouridine synthesis"/>
    <property type="evidence" value="ECO:0000314"/>
    <property type="project" value="RGD"/>
</dbReference>
<dbReference type="GO" id="GO:0031120">
    <property type="term" value="P:snRNA pseudouridine synthesis"/>
    <property type="evidence" value="ECO:0000318"/>
    <property type="project" value="GO_Central"/>
</dbReference>
<dbReference type="GO" id="GO:1905323">
    <property type="term" value="P:telomerase holoenzyme complex assembly"/>
    <property type="evidence" value="ECO:0000266"/>
    <property type="project" value="RGD"/>
</dbReference>
<dbReference type="GO" id="GO:0090669">
    <property type="term" value="P:telomerase RNA stabilization"/>
    <property type="evidence" value="ECO:0000266"/>
    <property type="project" value="RGD"/>
</dbReference>
<dbReference type="GO" id="GO:0007004">
    <property type="term" value="P:telomere maintenance via telomerase"/>
    <property type="evidence" value="ECO:0000250"/>
    <property type="project" value="UniProtKB"/>
</dbReference>
<dbReference type="CDD" id="cd02572">
    <property type="entry name" value="PseudoU_synth_hDyskerin"/>
    <property type="match status" value="1"/>
</dbReference>
<dbReference type="CDD" id="cd21148">
    <property type="entry name" value="PUA_Cbf5"/>
    <property type="match status" value="1"/>
</dbReference>
<dbReference type="FunFam" id="3.30.2350.10:FF:000001">
    <property type="entry name" value="H/ACA ribonucleoprotein complex subunit CBF5"/>
    <property type="match status" value="1"/>
</dbReference>
<dbReference type="Gene3D" id="3.30.2350.10">
    <property type="entry name" value="Pseudouridine synthase"/>
    <property type="match status" value="1"/>
</dbReference>
<dbReference type="Gene3D" id="2.30.130.10">
    <property type="entry name" value="PUA domain"/>
    <property type="match status" value="1"/>
</dbReference>
<dbReference type="InterPro" id="IPR012960">
    <property type="entry name" value="Dyskerin-like"/>
</dbReference>
<dbReference type="InterPro" id="IPR020103">
    <property type="entry name" value="PsdUridine_synth_cat_dom_sf"/>
</dbReference>
<dbReference type="InterPro" id="IPR002501">
    <property type="entry name" value="PsdUridine_synth_N"/>
</dbReference>
<dbReference type="InterPro" id="IPR002478">
    <property type="entry name" value="PUA"/>
</dbReference>
<dbReference type="InterPro" id="IPR015947">
    <property type="entry name" value="PUA-like_sf"/>
</dbReference>
<dbReference type="InterPro" id="IPR036974">
    <property type="entry name" value="PUA_sf"/>
</dbReference>
<dbReference type="InterPro" id="IPR004802">
    <property type="entry name" value="tRNA_PsdUridine_synth_B_fam"/>
</dbReference>
<dbReference type="InterPro" id="IPR032819">
    <property type="entry name" value="TruB_C"/>
</dbReference>
<dbReference type="InterPro" id="IPR004521">
    <property type="entry name" value="Uncharacterised_CHP00451"/>
</dbReference>
<dbReference type="NCBIfam" id="TIGR00425">
    <property type="entry name" value="CBF5"/>
    <property type="match status" value="1"/>
</dbReference>
<dbReference type="NCBIfam" id="NF003280">
    <property type="entry name" value="PRK04270.1"/>
    <property type="match status" value="1"/>
</dbReference>
<dbReference type="NCBIfam" id="TIGR00451">
    <property type="entry name" value="unchar_dom_2"/>
    <property type="match status" value="1"/>
</dbReference>
<dbReference type="PANTHER" id="PTHR23127">
    <property type="entry name" value="CENTROMERE/MICROTUBULE BINDING PROTEIN CBF5"/>
    <property type="match status" value="1"/>
</dbReference>
<dbReference type="PANTHER" id="PTHR23127:SF0">
    <property type="entry name" value="H_ACA RIBONUCLEOPROTEIN COMPLEX SUBUNIT DKC1"/>
    <property type="match status" value="1"/>
</dbReference>
<dbReference type="Pfam" id="PF08068">
    <property type="entry name" value="DKCLD"/>
    <property type="match status" value="1"/>
</dbReference>
<dbReference type="Pfam" id="PF01472">
    <property type="entry name" value="PUA"/>
    <property type="match status" value="1"/>
</dbReference>
<dbReference type="Pfam" id="PF16198">
    <property type="entry name" value="TruB_C_2"/>
    <property type="match status" value="1"/>
</dbReference>
<dbReference type="Pfam" id="PF01509">
    <property type="entry name" value="TruB_N"/>
    <property type="match status" value="1"/>
</dbReference>
<dbReference type="SMART" id="SM01136">
    <property type="entry name" value="DKCLD"/>
    <property type="match status" value="1"/>
</dbReference>
<dbReference type="SMART" id="SM00359">
    <property type="entry name" value="PUA"/>
    <property type="match status" value="1"/>
</dbReference>
<dbReference type="SUPFAM" id="SSF55120">
    <property type="entry name" value="Pseudouridine synthase"/>
    <property type="match status" value="1"/>
</dbReference>
<dbReference type="SUPFAM" id="SSF88697">
    <property type="entry name" value="PUA domain-like"/>
    <property type="match status" value="1"/>
</dbReference>
<dbReference type="PROSITE" id="PS50890">
    <property type="entry name" value="PUA"/>
    <property type="match status" value="1"/>
</dbReference>
<protein>
    <recommendedName>
        <fullName>H/ACA ribonucleoprotein complex subunit DKC1</fullName>
        <ecNumber evidence="2">5.4.99.-</ecNumber>
    </recommendedName>
    <alternativeName>
        <fullName>Dyskerin</fullName>
    </alternativeName>
    <alternativeName>
        <fullName evidence="9">Nopp140-associated protein of 57 kDa</fullName>
    </alternativeName>
    <alternativeName>
        <fullName evidence="9">Nucleolar protein NAP57</fullName>
    </alternativeName>
    <alternativeName>
        <fullName>Nucleolar protein family A member 4</fullName>
    </alternativeName>
    <alternativeName>
        <fullName>snoRNP protein DKC1</fullName>
    </alternativeName>
</protein>
<sequence>MADAEAAMTFPKKHKKKKERKPLPEADVAEIQHAEDFLIKPESKAAQLDTSQWPLLLKNFDRLNVRTTHYTPIPCGSNPLKREIGEYVRTGFINLDKPSNPSSHEVVAWIRRILRVEKTGHSGTLDPKVTGCLIVCIERATRLVKSQQSAGKEYVGVVRLHNAIEGTAQLSRALETLTGALFQRPPLIAAVKRQLRVRTIYESRVVEYDPERRLGVFWVSCEAGTYIRTLCVHLGLLLGVGGQMQELRRVRSGVVGERDHMVTMHDVLDAQYLYDHHRDESYLRRVVFPLEKLLTSHKRLVMKDSAVNAICYGAKIMLPGLLRYEDGIEVNQEVVVITTKGEAVCVAIALMTTAVISTCDHGVVAKIKRVIMERDTYPRKWGLGPKASQKKQLIKQGLLDKHGRPTDGTPASWTRDYVDYSDSSKKATAAEATPGPGVTADAASIVKRKRDSDSDADEATPTTTPRVKKEKKKKKEKADGGEEAAEDGDGDATRKKKKKKARAAEELSG</sequence>